<feature type="initiator methionine" description="Removed" evidence="3">
    <location>
        <position position="1"/>
    </location>
</feature>
<feature type="chain" id="PRO_0000185472" description="Phosphatidylinositol 5-phosphate 4-kinase type-2 beta">
    <location>
        <begin position="2"/>
        <end position="416"/>
    </location>
</feature>
<feature type="domain" description="PIPK" evidence="6">
    <location>
        <begin position="38"/>
        <end position="415"/>
    </location>
</feature>
<feature type="region of interest" description="Required for interaction with PIP5K1A" evidence="5">
    <location>
        <begin position="64"/>
        <end position="70"/>
    </location>
</feature>
<feature type="binding site" evidence="3">
    <location>
        <begin position="202"/>
        <end position="204"/>
    </location>
    <ligand>
        <name>ATP</name>
        <dbReference type="ChEBI" id="CHEBI:30616"/>
    </ligand>
</feature>
<feature type="binding site" evidence="3">
    <location>
        <begin position="203"/>
        <end position="204"/>
    </location>
    <ligand>
        <name>GTP</name>
        <dbReference type="ChEBI" id="CHEBI:37565"/>
    </ligand>
</feature>
<feature type="binding site" evidence="3">
    <location>
        <position position="214"/>
    </location>
    <ligand>
        <name>ATP</name>
        <dbReference type="ChEBI" id="CHEBI:30616"/>
    </ligand>
</feature>
<feature type="binding site" evidence="3">
    <location>
        <position position="214"/>
    </location>
    <ligand>
        <name>GTP</name>
        <dbReference type="ChEBI" id="CHEBI:37565"/>
    </ligand>
</feature>
<feature type="binding site" evidence="3">
    <location>
        <position position="369"/>
    </location>
    <ligand>
        <name>GTP</name>
        <dbReference type="ChEBI" id="CHEBI:37565"/>
    </ligand>
</feature>
<feature type="modified residue" description="N-acetylserine" evidence="3">
    <location>
        <position position="2"/>
    </location>
</feature>
<feature type="modified residue" description="Phosphothreonine" evidence="2">
    <location>
        <position position="8"/>
    </location>
</feature>
<feature type="modified residue" description="Phosphoserine" evidence="2">
    <location>
        <position position="19"/>
    </location>
</feature>
<feature type="modified residue" description="N6-acetyllysine" evidence="2">
    <location>
        <position position="94"/>
    </location>
</feature>
<feature type="modified residue" description="N6-acetyllysine" evidence="3">
    <location>
        <position position="150"/>
    </location>
</feature>
<feature type="modified residue" description="Phosphothreonine" evidence="4">
    <location>
        <position position="322"/>
    </location>
</feature>
<feature type="modified residue" description="Phosphoserine" evidence="3">
    <location>
        <position position="326"/>
    </location>
</feature>
<protein>
    <recommendedName>
        <fullName evidence="8">Phosphatidylinositol 5-phosphate 4-kinase type-2 beta</fullName>
        <ecNumber evidence="7">2.7.1.149</ecNumber>
    </recommendedName>
    <alternativeName>
        <fullName>1-phosphatidylinositol 5-phosphate 4-kinase 2-beta</fullName>
    </alternativeName>
    <alternativeName>
        <fullName>Diphosphoinositide kinase 2-beta</fullName>
    </alternativeName>
    <alternativeName>
        <fullName>Phosphatidylinositol 5-phosphate 4-kinase type II beta</fullName>
        <shortName>PI(5)P 4-kinase type II beta</shortName>
        <shortName>PIP4KII-beta</shortName>
    </alternativeName>
    <alternativeName>
        <fullName>Phosphatidylinositol-phosphate kinase IIgamma</fullName>
        <shortName>PIPKIIgamma</shortName>
    </alternativeName>
    <alternativeName>
        <fullName>PtdIns(5)P-4-kinase isoform 2-beta</fullName>
    </alternativeName>
</protein>
<gene>
    <name evidence="10" type="primary">Pip4k2b</name>
    <name type="synonym">Pip5k2b</name>
</gene>
<comment type="function">
    <text evidence="3 7">Participates in the biosynthesis of phosphatidylinositol 4,5-bisphosphate (PubMed:9685379). Preferentially utilizes GTP, rather than ATP, for PI(5)P phosphorylation and its activity reflects changes in direct proportion to the physiological GTP concentration. Its GTP-sensing activity is critical for metabolic adaptation (By similarity). PIP4Ks negatively regulate insulin signaling through a catalytic-independent mechanism. They interact with PIP5Ks and suppress PIP5K-mediated PtdIns(4,5)P2 synthesis and insulin-dependent conversion to PtdIns(3,4,5)P3 (By similarity).</text>
</comment>
<comment type="catalytic activity">
    <reaction evidence="7">
        <text>a 1,2-diacyl-sn-glycero-3-phospho-(1D-myo-inositol-5-phosphate) + ATP = a 1,2-diacyl-sn-glycero-3-phospho-(1D-myo-inositol-4,5-bisphosphate) + ADP + H(+)</text>
        <dbReference type="Rhea" id="RHEA:12280"/>
        <dbReference type="ChEBI" id="CHEBI:15378"/>
        <dbReference type="ChEBI" id="CHEBI:30616"/>
        <dbReference type="ChEBI" id="CHEBI:57795"/>
        <dbReference type="ChEBI" id="CHEBI:58456"/>
        <dbReference type="ChEBI" id="CHEBI:456216"/>
        <dbReference type="EC" id="2.7.1.149"/>
    </reaction>
    <physiologicalReaction direction="left-to-right" evidence="9">
        <dbReference type="Rhea" id="RHEA:12281"/>
    </physiologicalReaction>
</comment>
<comment type="catalytic activity">
    <reaction evidence="3">
        <text>1,2-dihexadecanoyl-sn-glycero-3-phospho-(1D-myo-inositol-5-phosphate) + ATP = 1,2-dihexadecanoyl-sn-glycero-3-phospho-(1D-myo-inositol-4,5-bisphosphate) + ADP + H(+)</text>
        <dbReference type="Rhea" id="RHEA:55992"/>
        <dbReference type="ChEBI" id="CHEBI:15378"/>
        <dbReference type="ChEBI" id="CHEBI:30616"/>
        <dbReference type="ChEBI" id="CHEBI:83423"/>
        <dbReference type="ChEBI" id="CHEBI:84968"/>
        <dbReference type="ChEBI" id="CHEBI:456216"/>
    </reaction>
    <physiologicalReaction direction="left-to-right" evidence="3">
        <dbReference type="Rhea" id="RHEA:55993"/>
    </physiologicalReaction>
</comment>
<comment type="catalytic activity">
    <reaction evidence="3">
        <text>1,2-dihexadecanoyl-sn-glycero-3-phospho-(1D-myo-inositol-5-phosphate) + GTP = 1,2-dihexadecanoyl-sn-glycero-3-phospho-(1D-myo-inositol-4,5-bisphosphate) + GDP + H(+)</text>
        <dbReference type="Rhea" id="RHEA:55964"/>
        <dbReference type="ChEBI" id="CHEBI:15378"/>
        <dbReference type="ChEBI" id="CHEBI:37565"/>
        <dbReference type="ChEBI" id="CHEBI:58189"/>
        <dbReference type="ChEBI" id="CHEBI:83423"/>
        <dbReference type="ChEBI" id="CHEBI:84968"/>
    </reaction>
    <physiologicalReaction direction="left-to-right" evidence="3">
        <dbReference type="Rhea" id="RHEA:55965"/>
    </physiologicalReaction>
</comment>
<comment type="subunit">
    <text evidence="3 5">Homodimer. Binds TNFRSF1A. Interacts with PIP4K2A; the interaction suppresses ubiquitination by the SPOP/CUL3 complex (By similarity). Probably interacts with PIP5K1A; the interaction inhibits PIP5K1A kinase activity (By similarity).</text>
</comment>
<comment type="subcellular location">
    <subcellularLocation>
        <location evidence="1">Endoplasmic reticulum membrane</location>
        <topology evidence="1">Peripheral membrane protein</topology>
    </subcellularLocation>
    <subcellularLocation>
        <location evidence="1">Cell membrane</location>
        <topology evidence="1">Peripheral membrane protein</topology>
    </subcellularLocation>
    <subcellularLocation>
        <location evidence="1">Nucleus</location>
    </subcellularLocation>
    <subcellularLocation>
        <location evidence="1">Cytoplasm</location>
    </subcellularLocation>
    <text evidence="1">Associated with the plasma membrane and the endoplasmic reticulum.</text>
</comment>
<comment type="PTM">
    <text evidence="3">Ubiquitinated by the SPOP/CUL3 complex. Ubiquitination is stimulated by PtdIns5P levels.</text>
</comment>
<comment type="PTM">
    <text evidence="3">Phosphorylated on serine residues.</text>
</comment>
<proteinExistence type="evidence at protein level"/>
<dbReference type="EC" id="2.7.1.149" evidence="7"/>
<dbReference type="EMBL" id="AF033355">
    <property type="protein sequence ID" value="AAC40203.1"/>
    <property type="molecule type" value="mRNA"/>
</dbReference>
<dbReference type="RefSeq" id="NP_446002.1">
    <property type="nucleotide sequence ID" value="NM_053550.2"/>
</dbReference>
<dbReference type="SMR" id="O88377"/>
<dbReference type="BioGRID" id="250135">
    <property type="interactions" value="1"/>
</dbReference>
<dbReference type="FunCoup" id="O88377">
    <property type="interactions" value="2245"/>
</dbReference>
<dbReference type="IntAct" id="O88377">
    <property type="interactions" value="1"/>
</dbReference>
<dbReference type="STRING" id="10116.ENSRNOP00000017989"/>
<dbReference type="iPTMnet" id="O88377"/>
<dbReference type="PhosphoSitePlus" id="O88377"/>
<dbReference type="SwissPalm" id="O88377"/>
<dbReference type="jPOST" id="O88377"/>
<dbReference type="PaxDb" id="10116-ENSRNOP00000017989"/>
<dbReference type="Ensembl" id="ENSRNOT00000017989.4">
    <property type="protein sequence ID" value="ENSRNOP00000017989.3"/>
    <property type="gene ID" value="ENSRNOG00000013030.4"/>
</dbReference>
<dbReference type="GeneID" id="89812"/>
<dbReference type="KEGG" id="rno:89812"/>
<dbReference type="AGR" id="RGD:621710"/>
<dbReference type="CTD" id="8396"/>
<dbReference type="RGD" id="621710">
    <property type="gene designation" value="Pip4k2b"/>
</dbReference>
<dbReference type="eggNOG" id="KOG0229">
    <property type="taxonomic scope" value="Eukaryota"/>
</dbReference>
<dbReference type="GeneTree" id="ENSGT00940000159874"/>
<dbReference type="HOGENOM" id="CLU_004312_7_0_1"/>
<dbReference type="InParanoid" id="O88377"/>
<dbReference type="OMA" id="MKSHENA"/>
<dbReference type="OrthoDB" id="51959at9989"/>
<dbReference type="PhylomeDB" id="O88377"/>
<dbReference type="TreeFam" id="TF354315"/>
<dbReference type="Reactome" id="R-RNO-1660499">
    <property type="pathway name" value="Synthesis of PIPs at the plasma membrane"/>
</dbReference>
<dbReference type="Reactome" id="R-RNO-6811555">
    <property type="pathway name" value="PI5P Regulates TP53 Acetylation"/>
</dbReference>
<dbReference type="Reactome" id="R-RNO-6811558">
    <property type="pathway name" value="PI5P, PP2A and IER3 Regulate PI3K/AKT Signaling"/>
</dbReference>
<dbReference type="Reactome" id="R-RNO-8847453">
    <property type="pathway name" value="Synthesis of PIPs in the nucleus"/>
</dbReference>
<dbReference type="PRO" id="PR:O88377"/>
<dbReference type="Proteomes" id="UP000002494">
    <property type="component" value="Chromosome 10"/>
</dbReference>
<dbReference type="Bgee" id="ENSRNOG00000013030">
    <property type="expression patterns" value="Expressed in skeletal muscle tissue and 18 other cell types or tissues"/>
</dbReference>
<dbReference type="GO" id="GO:0005776">
    <property type="term" value="C:autophagosome"/>
    <property type="evidence" value="ECO:0000266"/>
    <property type="project" value="RGD"/>
</dbReference>
<dbReference type="GO" id="GO:0005789">
    <property type="term" value="C:endoplasmic reticulum membrane"/>
    <property type="evidence" value="ECO:0007669"/>
    <property type="project" value="UniProtKB-SubCell"/>
</dbReference>
<dbReference type="GO" id="GO:0005634">
    <property type="term" value="C:nucleus"/>
    <property type="evidence" value="ECO:0000266"/>
    <property type="project" value="RGD"/>
</dbReference>
<dbReference type="GO" id="GO:0005886">
    <property type="term" value="C:plasma membrane"/>
    <property type="evidence" value="ECO:0000266"/>
    <property type="project" value="RGD"/>
</dbReference>
<dbReference type="GO" id="GO:0016308">
    <property type="term" value="F:1-phosphatidylinositol-4-phosphate 5-kinase activity"/>
    <property type="evidence" value="ECO:0000250"/>
    <property type="project" value="UniProtKB"/>
</dbReference>
<dbReference type="GO" id="GO:0016309">
    <property type="term" value="F:1-phosphatidylinositol-5-phosphate 4-kinase activity"/>
    <property type="evidence" value="ECO:0000318"/>
    <property type="project" value="GO_Central"/>
</dbReference>
<dbReference type="GO" id="GO:0005524">
    <property type="term" value="F:ATP binding"/>
    <property type="evidence" value="ECO:0000250"/>
    <property type="project" value="UniProtKB"/>
</dbReference>
<dbReference type="GO" id="GO:0005525">
    <property type="term" value="F:GTP binding"/>
    <property type="evidence" value="ECO:0000250"/>
    <property type="project" value="UniProtKB"/>
</dbReference>
<dbReference type="GO" id="GO:0042803">
    <property type="term" value="F:protein homodimerization activity"/>
    <property type="evidence" value="ECO:0000266"/>
    <property type="project" value="RGD"/>
</dbReference>
<dbReference type="GO" id="GO:1902635">
    <property type="term" value="P:1-phosphatidyl-1D-myo-inositol 4,5-bisphosphate biosynthetic process"/>
    <property type="evidence" value="ECO:0000250"/>
    <property type="project" value="UniProtKB"/>
</dbReference>
<dbReference type="GO" id="GO:0061909">
    <property type="term" value="P:autophagosome-lysosome fusion"/>
    <property type="evidence" value="ECO:0000250"/>
    <property type="project" value="UniProtKB"/>
</dbReference>
<dbReference type="GO" id="GO:0046627">
    <property type="term" value="P:negative regulation of insulin receptor signaling pathway"/>
    <property type="evidence" value="ECO:0000250"/>
    <property type="project" value="UniProtKB"/>
</dbReference>
<dbReference type="GO" id="GO:0046488">
    <property type="term" value="P:phosphatidylinositol metabolic process"/>
    <property type="evidence" value="ECO:0000266"/>
    <property type="project" value="RGD"/>
</dbReference>
<dbReference type="GO" id="GO:0046854">
    <property type="term" value="P:phosphatidylinositol phosphate biosynthetic process"/>
    <property type="evidence" value="ECO:0000318"/>
    <property type="project" value="GO_Central"/>
</dbReference>
<dbReference type="GO" id="GO:2000786">
    <property type="term" value="P:positive regulation of autophagosome assembly"/>
    <property type="evidence" value="ECO:0000266"/>
    <property type="project" value="RGD"/>
</dbReference>
<dbReference type="GO" id="GO:0010506">
    <property type="term" value="P:regulation of autophagy"/>
    <property type="evidence" value="ECO:0000250"/>
    <property type="project" value="UniProtKB"/>
</dbReference>
<dbReference type="CDD" id="cd17310">
    <property type="entry name" value="PIPKc_PIP5K2B"/>
    <property type="match status" value="1"/>
</dbReference>
<dbReference type="FunFam" id="3.30.800.10:FF:000002">
    <property type="entry name" value="Phosphatidylinositol 5-phosphate 4-kinase type-2 beta"/>
    <property type="match status" value="1"/>
</dbReference>
<dbReference type="FunFam" id="3.30.810.10:FF:000003">
    <property type="entry name" value="Phosphatidylinositol 5-phosphate 4-kinase type-2 beta"/>
    <property type="match status" value="1"/>
</dbReference>
<dbReference type="FunFam" id="3.30.810.10:FF:000004">
    <property type="entry name" value="Phosphatidylinositol 5-phosphate 4-kinase type-2 beta"/>
    <property type="match status" value="1"/>
</dbReference>
<dbReference type="Gene3D" id="3.30.810.10">
    <property type="entry name" value="2-Layer Sandwich"/>
    <property type="match status" value="2"/>
</dbReference>
<dbReference type="Gene3D" id="3.30.800.10">
    <property type="entry name" value="Phosphatidylinositol Phosphate Kinase II Beta"/>
    <property type="match status" value="1"/>
</dbReference>
<dbReference type="InterPro" id="IPR027483">
    <property type="entry name" value="PInositol-4-P-4/5-kinase_C_sf"/>
</dbReference>
<dbReference type="InterPro" id="IPR002498">
    <property type="entry name" value="PInositol-4-P-4/5-kinase_core"/>
</dbReference>
<dbReference type="InterPro" id="IPR027484">
    <property type="entry name" value="PInositol-4-P-5-kinase_N"/>
</dbReference>
<dbReference type="InterPro" id="IPR023610">
    <property type="entry name" value="PInositol-4/5-P-5/4-kinase"/>
</dbReference>
<dbReference type="PANTHER" id="PTHR23086:SF22">
    <property type="entry name" value="PHOSPHATIDYLINOSITOL 5-PHOSPHATE 4-KINASE TYPE-2 BETA"/>
    <property type="match status" value="1"/>
</dbReference>
<dbReference type="PANTHER" id="PTHR23086">
    <property type="entry name" value="PHOSPHATIDYLINOSITOL-4-PHOSPHATE 5-KINASE"/>
    <property type="match status" value="1"/>
</dbReference>
<dbReference type="Pfam" id="PF01504">
    <property type="entry name" value="PIP5K"/>
    <property type="match status" value="1"/>
</dbReference>
<dbReference type="SMART" id="SM00330">
    <property type="entry name" value="PIPKc"/>
    <property type="match status" value="1"/>
</dbReference>
<dbReference type="SUPFAM" id="SSF56104">
    <property type="entry name" value="SAICAR synthase-like"/>
    <property type="match status" value="1"/>
</dbReference>
<dbReference type="PROSITE" id="PS51455">
    <property type="entry name" value="PIPK"/>
    <property type="match status" value="1"/>
</dbReference>
<name>PI42B_RAT</name>
<evidence type="ECO:0000250" key="1"/>
<evidence type="ECO:0000250" key="2">
    <source>
        <dbReference type="UniProtKB" id="P48426"/>
    </source>
</evidence>
<evidence type="ECO:0000250" key="3">
    <source>
        <dbReference type="UniProtKB" id="P78356"/>
    </source>
</evidence>
<evidence type="ECO:0000250" key="4">
    <source>
        <dbReference type="UniProtKB" id="Q80XI4"/>
    </source>
</evidence>
<evidence type="ECO:0000250" key="5">
    <source>
        <dbReference type="UniProtKB" id="Q8TBX8"/>
    </source>
</evidence>
<evidence type="ECO:0000255" key="6">
    <source>
        <dbReference type="PROSITE-ProRule" id="PRU00781"/>
    </source>
</evidence>
<evidence type="ECO:0000269" key="7">
    <source>
    </source>
</evidence>
<evidence type="ECO:0000305" key="8"/>
<evidence type="ECO:0000305" key="9">
    <source>
    </source>
</evidence>
<evidence type="ECO:0000312" key="10">
    <source>
        <dbReference type="RGD" id="621710"/>
    </source>
</evidence>
<keyword id="KW-0007">Acetylation</keyword>
<keyword id="KW-0067">ATP-binding</keyword>
<keyword id="KW-1003">Cell membrane</keyword>
<keyword id="KW-0963">Cytoplasm</keyword>
<keyword id="KW-0256">Endoplasmic reticulum</keyword>
<keyword id="KW-0342">GTP-binding</keyword>
<keyword id="KW-0418">Kinase</keyword>
<keyword id="KW-0443">Lipid metabolism</keyword>
<keyword id="KW-0472">Membrane</keyword>
<keyword id="KW-0547">Nucleotide-binding</keyword>
<keyword id="KW-0539">Nucleus</keyword>
<keyword id="KW-0597">Phosphoprotein</keyword>
<keyword id="KW-1185">Reference proteome</keyword>
<keyword id="KW-0808">Transferase</keyword>
<keyword id="KW-0832">Ubl conjugation</keyword>
<sequence length="416" mass="47264">MSSNCTSTTAVAVAPLSASKTKTKKKHFVCQKVKLFRASEPILSVLMWGVNHTINELSNVPVPVMLMPDDFKAYSKIKVDNHLFNKENLPSRFKFKEYCPMVFRNLRERFGIDDQDYQNSVTRSAPINSDSQGRCGTRFLTTYDRRFVIKTVSSEDVAEMHNILKKYHQFIVECHGNTLLPQFLGMYRLTVDGVETYMVVTRNVFSHRLTVHRKYDLKGSTVAREASDKEKAKDLPTFKDNDFLNEGQKLRVGEESKKNFLEKLKRDVEFLAQLKIMDYSLLVGIHDVDRAEQEETEVEDRAEEEECENDGVGGGLLCSYGTPPDSPGNLLSFPRFFGPGEFDPSVDVYAMKSHESAPKKEVYFMAIIDILTPYDAKKKAAHAAKTVKHGAGAEISTVNPEQYSKRFNEFMSNILT</sequence>
<organism>
    <name type="scientific">Rattus norvegicus</name>
    <name type="common">Rat</name>
    <dbReference type="NCBI Taxonomy" id="10116"/>
    <lineage>
        <taxon>Eukaryota</taxon>
        <taxon>Metazoa</taxon>
        <taxon>Chordata</taxon>
        <taxon>Craniata</taxon>
        <taxon>Vertebrata</taxon>
        <taxon>Euteleostomi</taxon>
        <taxon>Mammalia</taxon>
        <taxon>Eutheria</taxon>
        <taxon>Euarchontoglires</taxon>
        <taxon>Glires</taxon>
        <taxon>Rodentia</taxon>
        <taxon>Myomorpha</taxon>
        <taxon>Muroidea</taxon>
        <taxon>Muridae</taxon>
        <taxon>Murinae</taxon>
        <taxon>Rattus</taxon>
    </lineage>
</organism>
<reference key="1">
    <citation type="journal article" date="1998" name="J. Biol. Chem.">
        <title>A novel phosphatidylinositol-5-phosphate 4-kinase (phosphatidylinositol-phosphate kinase IIgamma) is phosphorylated in the endoplasmic reticulum in response to mitogenic signals.</title>
        <authorList>
            <person name="Itoh T."/>
            <person name="Ijuin T."/>
            <person name="Takenawa T."/>
        </authorList>
    </citation>
    <scope>NUCLEOTIDE SEQUENCE [MRNA]</scope>
    <scope>FUNCTION</scope>
    <scope>CATALYTIC ACTIVITY</scope>
    <source>
        <tissue>Brain</tissue>
    </source>
</reference>
<accession>O88377</accession>